<reference key="1">
    <citation type="journal article" date="2010" name="Genome Biol. Evol.">
        <title>Continuing evolution of Burkholderia mallei through genome reduction and large-scale rearrangements.</title>
        <authorList>
            <person name="Losada L."/>
            <person name="Ronning C.M."/>
            <person name="DeShazer D."/>
            <person name="Woods D."/>
            <person name="Fedorova N."/>
            <person name="Kim H.S."/>
            <person name="Shabalina S.A."/>
            <person name="Pearson T.R."/>
            <person name="Brinkac L."/>
            <person name="Tan P."/>
            <person name="Nandi T."/>
            <person name="Crabtree J."/>
            <person name="Badger J."/>
            <person name="Beckstrom-Sternberg S."/>
            <person name="Saqib M."/>
            <person name="Schutzer S.E."/>
            <person name="Keim P."/>
            <person name="Nierman W.C."/>
        </authorList>
    </citation>
    <scope>NUCLEOTIDE SEQUENCE [LARGE SCALE GENOMIC DNA]</scope>
    <source>
        <strain>668</strain>
    </source>
</reference>
<keyword id="KW-0119">Carbohydrate metabolism</keyword>
<keyword id="KW-0320">Glycogen biosynthesis</keyword>
<keyword id="KW-0321">Glycogen metabolism</keyword>
<keyword id="KW-0328">Glycosyltransferase</keyword>
<keyword id="KW-0808">Transferase</keyword>
<feature type="chain" id="PRO_1000044972" description="1,4-alpha-glucan branching enzyme GlgB">
    <location>
        <begin position="1"/>
        <end position="738"/>
    </location>
</feature>
<feature type="active site" description="Nucleophile" evidence="1">
    <location>
        <position position="417"/>
    </location>
</feature>
<feature type="active site" description="Proton donor" evidence="1">
    <location>
        <position position="472"/>
    </location>
</feature>
<sequence>MTDAPFDRADIDALLGARHPDPFACLGPHRVGDATVVRTLLPGALRVRAIAAGGGVLGELRQVDPAGCFAGALPDGRERGERPRYRLSIDWPDARQDVEDAYAFGTLLDEDALARFAAGDPRAALACLGARALDMDGVPGVRFAVWAPGASRVSVVGDFNGWDARRHPMRLRRPWGVWELFVPRIGAGERYKFALRARDGAALPLKADPCACRTEAPPRTASIVADLDALERFGWHDDAWLRARASLDLAHAPVSIYEVHPESWLRVAAEGNRSATWDELAQRLIPYAAGMGFSHVELTPIAEYPFGGSWGYQSLSPFAPSARFGPPEGFARFVEHAHAAGLGVIVDWVPAHFPDDPHGLGKFDGTALFEHADPREGWHPDWHTHVFNVGRREVGAFLIASALAWAHRYHVDGIRVDAVASMLYRDYSRAAGEWVPNVYGGRENLESIAFLKHFNDTLHGPAAPPGVATFAEESTAWPGVTAPTAEHGLGFDFKWNMGWMHDTLAYLREDPIHRRHHHDRLTFGLVYAFSERFVLPLSHDEVVHGKGSLAAKMPGDAWQRLANLRAYFGFMWAHPGKKLLFMGGEFAQWEEFAHDATPQWDLLDAPAHRGVQRLVRDLNRLHAAEPALHALDDRPAGFAWLVGDDRNNSVFAFVRRDDAGRMLVAVCNFTPVPRTDYRLGLPAPGRWAEVLNTDGAAYGGTDAGNGGAVQADEIPAHGERWSAALRLPPLATLWLRPA</sequence>
<dbReference type="EC" id="2.4.1.18" evidence="1"/>
<dbReference type="EMBL" id="CP000570">
    <property type="protein sequence ID" value="ABN83141.1"/>
    <property type="molecule type" value="Genomic_DNA"/>
</dbReference>
<dbReference type="RefSeq" id="WP_011851433.1">
    <property type="nucleotide sequence ID" value="NC_009074.1"/>
</dbReference>
<dbReference type="SMR" id="A3N8B3"/>
<dbReference type="CAZy" id="CBM48">
    <property type="family name" value="Carbohydrate-Binding Module Family 48"/>
</dbReference>
<dbReference type="CAZy" id="GH13">
    <property type="family name" value="Glycoside Hydrolase Family 13"/>
</dbReference>
<dbReference type="KEGG" id="bpd:BURPS668_1543"/>
<dbReference type="HOGENOM" id="CLU_004245_3_2_4"/>
<dbReference type="UniPathway" id="UPA00164"/>
<dbReference type="GO" id="GO:0005829">
    <property type="term" value="C:cytosol"/>
    <property type="evidence" value="ECO:0007669"/>
    <property type="project" value="TreeGrafter"/>
</dbReference>
<dbReference type="GO" id="GO:0003844">
    <property type="term" value="F:1,4-alpha-glucan branching enzyme activity"/>
    <property type="evidence" value="ECO:0007669"/>
    <property type="project" value="UniProtKB-UniRule"/>
</dbReference>
<dbReference type="GO" id="GO:0043169">
    <property type="term" value="F:cation binding"/>
    <property type="evidence" value="ECO:0007669"/>
    <property type="project" value="InterPro"/>
</dbReference>
<dbReference type="GO" id="GO:0004553">
    <property type="term" value="F:hydrolase activity, hydrolyzing O-glycosyl compounds"/>
    <property type="evidence" value="ECO:0007669"/>
    <property type="project" value="InterPro"/>
</dbReference>
<dbReference type="GO" id="GO:0005978">
    <property type="term" value="P:glycogen biosynthetic process"/>
    <property type="evidence" value="ECO:0007669"/>
    <property type="project" value="UniProtKB-UniRule"/>
</dbReference>
<dbReference type="CDD" id="cd11322">
    <property type="entry name" value="AmyAc_Glg_BE"/>
    <property type="match status" value="1"/>
</dbReference>
<dbReference type="CDD" id="cd02855">
    <property type="entry name" value="E_set_GBE_prok_N"/>
    <property type="match status" value="1"/>
</dbReference>
<dbReference type="FunFam" id="2.60.40.1180:FF:000002">
    <property type="entry name" value="1,4-alpha-glucan branching enzyme GlgB"/>
    <property type="match status" value="1"/>
</dbReference>
<dbReference type="FunFam" id="3.20.20.80:FF:000003">
    <property type="entry name" value="1,4-alpha-glucan branching enzyme GlgB"/>
    <property type="match status" value="1"/>
</dbReference>
<dbReference type="Gene3D" id="3.20.20.80">
    <property type="entry name" value="Glycosidases"/>
    <property type="match status" value="1"/>
</dbReference>
<dbReference type="Gene3D" id="2.60.40.1180">
    <property type="entry name" value="Golgi alpha-mannosidase II"/>
    <property type="match status" value="1"/>
</dbReference>
<dbReference type="Gene3D" id="2.60.40.10">
    <property type="entry name" value="Immunoglobulins"/>
    <property type="match status" value="1"/>
</dbReference>
<dbReference type="HAMAP" id="MF_00685">
    <property type="entry name" value="GlgB"/>
    <property type="match status" value="1"/>
</dbReference>
<dbReference type="InterPro" id="IPR006048">
    <property type="entry name" value="A-amylase/branching_C"/>
</dbReference>
<dbReference type="InterPro" id="IPR037439">
    <property type="entry name" value="Branching_enzy"/>
</dbReference>
<dbReference type="InterPro" id="IPR006407">
    <property type="entry name" value="GlgB"/>
</dbReference>
<dbReference type="InterPro" id="IPR054169">
    <property type="entry name" value="GlgB_N"/>
</dbReference>
<dbReference type="InterPro" id="IPR044143">
    <property type="entry name" value="GlgB_N_E_set_prok"/>
</dbReference>
<dbReference type="InterPro" id="IPR006047">
    <property type="entry name" value="Glyco_hydro_13_cat_dom"/>
</dbReference>
<dbReference type="InterPro" id="IPR004193">
    <property type="entry name" value="Glyco_hydro_13_N"/>
</dbReference>
<dbReference type="InterPro" id="IPR013780">
    <property type="entry name" value="Glyco_hydro_b"/>
</dbReference>
<dbReference type="InterPro" id="IPR017853">
    <property type="entry name" value="Glycoside_hydrolase_SF"/>
</dbReference>
<dbReference type="InterPro" id="IPR013783">
    <property type="entry name" value="Ig-like_fold"/>
</dbReference>
<dbReference type="InterPro" id="IPR014756">
    <property type="entry name" value="Ig_E-set"/>
</dbReference>
<dbReference type="NCBIfam" id="TIGR01515">
    <property type="entry name" value="branching_enzym"/>
    <property type="match status" value="1"/>
</dbReference>
<dbReference type="NCBIfam" id="NF003811">
    <property type="entry name" value="PRK05402.1"/>
    <property type="match status" value="1"/>
</dbReference>
<dbReference type="NCBIfam" id="NF008967">
    <property type="entry name" value="PRK12313.1"/>
    <property type="match status" value="1"/>
</dbReference>
<dbReference type="PANTHER" id="PTHR43651">
    <property type="entry name" value="1,4-ALPHA-GLUCAN-BRANCHING ENZYME"/>
    <property type="match status" value="1"/>
</dbReference>
<dbReference type="PANTHER" id="PTHR43651:SF3">
    <property type="entry name" value="1,4-ALPHA-GLUCAN-BRANCHING ENZYME"/>
    <property type="match status" value="1"/>
</dbReference>
<dbReference type="Pfam" id="PF02806">
    <property type="entry name" value="Alpha-amylase_C"/>
    <property type="match status" value="1"/>
</dbReference>
<dbReference type="Pfam" id="PF02922">
    <property type="entry name" value="CBM_48"/>
    <property type="match status" value="1"/>
</dbReference>
<dbReference type="Pfam" id="PF22019">
    <property type="entry name" value="GlgB_N"/>
    <property type="match status" value="1"/>
</dbReference>
<dbReference type="PIRSF" id="PIRSF000463">
    <property type="entry name" value="GlgB"/>
    <property type="match status" value="1"/>
</dbReference>
<dbReference type="SMART" id="SM00642">
    <property type="entry name" value="Aamy"/>
    <property type="match status" value="1"/>
</dbReference>
<dbReference type="SUPFAM" id="SSF51445">
    <property type="entry name" value="(Trans)glycosidases"/>
    <property type="match status" value="1"/>
</dbReference>
<dbReference type="SUPFAM" id="SSF81296">
    <property type="entry name" value="E set domains"/>
    <property type="match status" value="1"/>
</dbReference>
<dbReference type="SUPFAM" id="SSF51011">
    <property type="entry name" value="Glycosyl hydrolase domain"/>
    <property type="match status" value="1"/>
</dbReference>
<protein>
    <recommendedName>
        <fullName evidence="1">1,4-alpha-glucan branching enzyme GlgB</fullName>
        <ecNumber evidence="1">2.4.1.18</ecNumber>
    </recommendedName>
    <alternativeName>
        <fullName evidence="1">1,4-alpha-D-glucan:1,4-alpha-D-glucan 6-glucosyl-transferase</fullName>
    </alternativeName>
    <alternativeName>
        <fullName evidence="1">Alpha-(1-&gt;4)-glucan branching enzyme</fullName>
    </alternativeName>
    <alternativeName>
        <fullName evidence="1">Glycogen branching enzyme</fullName>
        <shortName evidence="1">BE</shortName>
    </alternativeName>
</protein>
<organism>
    <name type="scientific">Burkholderia pseudomallei (strain 668)</name>
    <dbReference type="NCBI Taxonomy" id="320373"/>
    <lineage>
        <taxon>Bacteria</taxon>
        <taxon>Pseudomonadati</taxon>
        <taxon>Pseudomonadota</taxon>
        <taxon>Betaproteobacteria</taxon>
        <taxon>Burkholderiales</taxon>
        <taxon>Burkholderiaceae</taxon>
        <taxon>Burkholderia</taxon>
        <taxon>pseudomallei group</taxon>
    </lineage>
</organism>
<name>GLGB_BURP6</name>
<accession>A3N8B3</accession>
<comment type="function">
    <text evidence="1">Catalyzes the formation of the alpha-1,6-glucosidic linkages in glycogen by scission of a 1,4-alpha-linked oligosaccharide from growing alpha-1,4-glucan chains and the subsequent attachment of the oligosaccharide to the alpha-1,6 position.</text>
</comment>
<comment type="catalytic activity">
    <reaction evidence="1">
        <text>Transfers a segment of a (1-&gt;4)-alpha-D-glucan chain to a primary hydroxy group in a similar glucan chain.</text>
        <dbReference type="EC" id="2.4.1.18"/>
    </reaction>
</comment>
<comment type="pathway">
    <text evidence="1">Glycan biosynthesis; glycogen biosynthesis.</text>
</comment>
<comment type="subunit">
    <text evidence="1">Monomer.</text>
</comment>
<comment type="similarity">
    <text evidence="1">Belongs to the glycosyl hydrolase 13 family. GlgB subfamily.</text>
</comment>
<proteinExistence type="inferred from homology"/>
<evidence type="ECO:0000255" key="1">
    <source>
        <dbReference type="HAMAP-Rule" id="MF_00685"/>
    </source>
</evidence>
<gene>
    <name evidence="1" type="primary">glgB</name>
    <name type="ordered locus">BURPS668_1543</name>
</gene>